<gene>
    <name type="ordered locus">LS215_2281</name>
</gene>
<sequence length="308" mass="34849">MKITPIAFESLGVRSQATLIETKDLRVLVDPAISLAPRRYNLPPHQREVDRLTELAKVLVDVAKDVDVIIVSHYHYDHHDPGYVIPTDIYKNKLVFIKDPQNMINNSQKYRRAPRFLRSIKDKPSKIEIADGKTLELGHTTISFSPAVPHGADERLGYVIQVAISDKDSTVIFTSDIEGAPKDVHLKFTKEKMPKTIIIDGPLSYLLGRVLKEEELEKSIRNMEEIVKNGLETVIIDHHVLRDINYAEVLKPVYDIAKDLGVRVTTAAEYLNLEPLILEARRKELFKEDNRPARIPRGLANLLSAGEG</sequence>
<dbReference type="EMBL" id="CP001399">
    <property type="protein sequence ID" value="ACP36266.1"/>
    <property type="molecule type" value="Genomic_DNA"/>
</dbReference>
<dbReference type="RefSeq" id="WP_012714202.1">
    <property type="nucleotide sequence ID" value="NC_012589.1"/>
</dbReference>
<dbReference type="GeneID" id="7806580"/>
<dbReference type="KEGG" id="sis:LS215_2281"/>
<dbReference type="HOGENOM" id="CLU_079268_0_0_2"/>
<dbReference type="OrthoDB" id="21331at2157"/>
<dbReference type="Proteomes" id="UP000001747">
    <property type="component" value="Chromosome"/>
</dbReference>
<dbReference type="Gene3D" id="3.60.15.10">
    <property type="entry name" value="Ribonuclease Z/Hydroxyacylglutathione hydrolase-like"/>
    <property type="match status" value="1"/>
</dbReference>
<dbReference type="HAMAP" id="MF_01406">
    <property type="entry name" value="UPF0282"/>
    <property type="match status" value="1"/>
</dbReference>
<dbReference type="InterPro" id="IPR001279">
    <property type="entry name" value="Metallo-B-lactamas"/>
</dbReference>
<dbReference type="InterPro" id="IPR036866">
    <property type="entry name" value="RibonucZ/Hydroxyglut_hydro"/>
</dbReference>
<dbReference type="InterPro" id="IPR050114">
    <property type="entry name" value="UPF0173_UPF0282_UlaG_hydrolase"/>
</dbReference>
<dbReference type="InterPro" id="IPR014426">
    <property type="entry name" value="UPF0282_hydrls"/>
</dbReference>
<dbReference type="NCBIfam" id="NF003287">
    <property type="entry name" value="PRK04286.1-1"/>
    <property type="match status" value="1"/>
</dbReference>
<dbReference type="PANTHER" id="PTHR43546">
    <property type="entry name" value="UPF0173 METAL-DEPENDENT HYDROLASE MJ1163-RELATED"/>
    <property type="match status" value="1"/>
</dbReference>
<dbReference type="PANTHER" id="PTHR43546:SF4">
    <property type="entry name" value="UPF0282 PROTEIN MJ1629"/>
    <property type="match status" value="1"/>
</dbReference>
<dbReference type="Pfam" id="PF00753">
    <property type="entry name" value="Lactamase_B"/>
    <property type="match status" value="1"/>
</dbReference>
<dbReference type="PIRSF" id="PIRSF004944">
    <property type="entry name" value="UCP004944_hydrls"/>
    <property type="match status" value="1"/>
</dbReference>
<dbReference type="SUPFAM" id="SSF56281">
    <property type="entry name" value="Metallo-hydrolase/oxidoreductase"/>
    <property type="match status" value="1"/>
</dbReference>
<proteinExistence type="inferred from homology"/>
<evidence type="ECO:0000255" key="1">
    <source>
        <dbReference type="HAMAP-Rule" id="MF_01406"/>
    </source>
</evidence>
<protein>
    <recommendedName>
        <fullName evidence="1">UPF0282 protein LS215_2281</fullName>
    </recommendedName>
</protein>
<feature type="chain" id="PRO_1000215206" description="UPF0282 protein LS215_2281">
    <location>
        <begin position="1"/>
        <end position="308"/>
    </location>
</feature>
<organism>
    <name type="scientific">Saccharolobus islandicus (strain L.S.2.15 / Lassen #1)</name>
    <name type="common">Sulfolobus islandicus</name>
    <dbReference type="NCBI Taxonomy" id="429572"/>
    <lineage>
        <taxon>Archaea</taxon>
        <taxon>Thermoproteota</taxon>
        <taxon>Thermoprotei</taxon>
        <taxon>Sulfolobales</taxon>
        <taxon>Sulfolobaceae</taxon>
        <taxon>Saccharolobus</taxon>
    </lineage>
</organism>
<comment type="similarity">
    <text evidence="1">Belongs to the UPF0282 family.</text>
</comment>
<reference key="1">
    <citation type="journal article" date="2009" name="Proc. Natl. Acad. Sci. U.S.A.">
        <title>Biogeography of the Sulfolobus islandicus pan-genome.</title>
        <authorList>
            <person name="Reno M.L."/>
            <person name="Held N.L."/>
            <person name="Fields C.J."/>
            <person name="Burke P.V."/>
            <person name="Whitaker R.J."/>
        </authorList>
    </citation>
    <scope>NUCLEOTIDE SEQUENCE [LARGE SCALE GENOMIC DNA]</scope>
    <source>
        <strain>L.S.2.15 / Lassen #1</strain>
    </source>
</reference>
<name>Y2281_SACI2</name>
<accession>C3MJW3</accession>